<keyword id="KW-0378">Hydrolase</keyword>
<keyword id="KW-0442">Lipid degradation</keyword>
<keyword id="KW-0443">Lipid metabolism</keyword>
<proteinExistence type="evidence at protein level"/>
<sequence length="433" mass="47225">MPILPVPALNALLTKTIKTIKTGAAKNAHQHHVLHHTLKGLDNLPAPVLERINRRLKASTAEQYPLADAHLRLILAISNKLKRPLAIDKLPKLRQKFGTDAVSLQAPSVWQQNADASGSTENAVSWQDKTIANADGGDMTVRCYQKSTQNSERKSTDEAAMLFFHGGGFCIGDIDTHHEFCHTVCAQTGWAVVSVDYRMAPEYPAPTALKDCLAAYAWLAEHSQSLGASPSRIVLSGDSAGGCLAALVAQQVIKPIDALWQDNNQAPAADKKVNDTFKNSLADLPRPLAQLPLYPVTDYEAEYPSWELYGEGLLLDHNDAEVFNSAYTQHSGLPQSHPLISVMHGDNTQLCPSYIVVAELDILRDEGLAYAELLQKEGVQVQTYTVLGAPHGFINLMSVHQGLGNQTTYIINEFACLVQNLLTSEGDKPNLRA</sequence>
<name>LIP2_MORS1</name>
<reference key="1">
    <citation type="journal article" date="1991" name="DNA Cell Biol.">
        <title>Nucleotide sequence of the lipase gene lip2 from the antarctic psychrotroph Moraxella TA144 and site-specific mutagenesis of the conserved serine and histidine residues.</title>
        <authorList>
            <person name="Feller G."/>
            <person name="Thiry M."/>
            <person name="Gerday C."/>
        </authorList>
    </citation>
    <scope>NUCLEOTIDE SEQUENCE [GENOMIC DNA]</scope>
    <scope>MUTAGENESIS</scope>
</reference>
<gene>
    <name type="primary">lip2</name>
    <name type="synonym">L2</name>
</gene>
<organism>
    <name type="scientific">Moraxella sp. (strain TA144)</name>
    <dbReference type="NCBI Taxonomy" id="77152"/>
    <lineage>
        <taxon>Bacteria</taxon>
        <taxon>Pseudomonadati</taxon>
        <taxon>Pseudomonadota</taxon>
        <taxon>Gammaproteobacteria</taxon>
        <taxon>Moraxellales</taxon>
        <taxon>Moraxellaceae</taxon>
        <taxon>Moraxella</taxon>
    </lineage>
</organism>
<protein>
    <recommendedName>
        <fullName>Lipase 2</fullName>
        <ecNumber>3.1.1.3</ecNumber>
    </recommendedName>
    <alternativeName>
        <fullName>Triacylglycerol lipase</fullName>
    </alternativeName>
</protein>
<accession>P24484</accession>
<dbReference type="EC" id="3.1.1.3"/>
<dbReference type="EMBL" id="X53868">
    <property type="protein sequence ID" value="CAA37862.1"/>
    <property type="molecule type" value="Genomic_DNA"/>
</dbReference>
<dbReference type="PIR" id="A39556">
    <property type="entry name" value="A39556"/>
</dbReference>
<dbReference type="SMR" id="P24484"/>
<dbReference type="ESTHER" id="morsp-2lipa">
    <property type="family name" value="Hormone-sensitive_lipase_like"/>
</dbReference>
<dbReference type="GO" id="GO:0004806">
    <property type="term" value="F:triacylglycerol lipase activity"/>
    <property type="evidence" value="ECO:0007669"/>
    <property type="project" value="UniProtKB-EC"/>
</dbReference>
<dbReference type="GO" id="GO:0016042">
    <property type="term" value="P:lipid catabolic process"/>
    <property type="evidence" value="ECO:0007669"/>
    <property type="project" value="UniProtKB-KW"/>
</dbReference>
<dbReference type="Gene3D" id="3.40.50.1820">
    <property type="entry name" value="alpha/beta hydrolase"/>
    <property type="match status" value="1"/>
</dbReference>
<dbReference type="InterPro" id="IPR013094">
    <property type="entry name" value="AB_hydrolase_3"/>
</dbReference>
<dbReference type="InterPro" id="IPR029058">
    <property type="entry name" value="AB_hydrolase_fold"/>
</dbReference>
<dbReference type="InterPro" id="IPR050300">
    <property type="entry name" value="GDXG_lipolytic_enzyme"/>
</dbReference>
<dbReference type="InterPro" id="IPR002168">
    <property type="entry name" value="Lipase_GDXG_HIS_AS"/>
</dbReference>
<dbReference type="InterPro" id="IPR033140">
    <property type="entry name" value="Lipase_GDXG_put_SER_AS"/>
</dbReference>
<dbReference type="PANTHER" id="PTHR48081">
    <property type="entry name" value="AB HYDROLASE SUPERFAMILY PROTEIN C4A8.06C"/>
    <property type="match status" value="1"/>
</dbReference>
<dbReference type="PANTHER" id="PTHR48081:SF8">
    <property type="entry name" value="ALPHA_BETA HYDROLASE FOLD-3 DOMAIN-CONTAINING PROTEIN-RELATED"/>
    <property type="match status" value="1"/>
</dbReference>
<dbReference type="Pfam" id="PF07859">
    <property type="entry name" value="Abhydrolase_3"/>
    <property type="match status" value="1"/>
</dbReference>
<dbReference type="SUPFAM" id="SSF53474">
    <property type="entry name" value="alpha/beta-Hydrolases"/>
    <property type="match status" value="1"/>
</dbReference>
<dbReference type="PROSITE" id="PS01173">
    <property type="entry name" value="LIPASE_GDXG_HIS"/>
    <property type="match status" value="1"/>
</dbReference>
<dbReference type="PROSITE" id="PS01174">
    <property type="entry name" value="LIPASE_GDXG_SER"/>
    <property type="match status" value="1"/>
</dbReference>
<comment type="catalytic activity">
    <reaction>
        <text>a triacylglycerol + H2O = a diacylglycerol + a fatty acid + H(+)</text>
        <dbReference type="Rhea" id="RHEA:12044"/>
        <dbReference type="ChEBI" id="CHEBI:15377"/>
        <dbReference type="ChEBI" id="CHEBI:15378"/>
        <dbReference type="ChEBI" id="CHEBI:17855"/>
        <dbReference type="ChEBI" id="CHEBI:18035"/>
        <dbReference type="ChEBI" id="CHEBI:28868"/>
        <dbReference type="EC" id="3.1.1.3"/>
    </reaction>
</comment>
<comment type="biophysicochemical properties">
    <temperatureDependence>
        <text>Active at temperatures close to 0 degree Celsius.</text>
    </temperatureDependence>
</comment>
<comment type="similarity">
    <text evidence="5">Belongs to the 'GDXG' lipolytic enzyme family.</text>
</comment>
<evidence type="ECO:0000250" key="1">
    <source>
        <dbReference type="UniProtKB" id="P23872"/>
    </source>
</evidence>
<evidence type="ECO:0000250" key="2">
    <source>
        <dbReference type="UniProtKB" id="Q5NUF3"/>
    </source>
</evidence>
<evidence type="ECO:0000255" key="3">
    <source>
        <dbReference type="PROSITE-ProRule" id="PRU10038"/>
    </source>
</evidence>
<evidence type="ECO:0000269" key="4">
    <source>
    </source>
</evidence>
<evidence type="ECO:0000305" key="5"/>
<feature type="chain" id="PRO_0000071552" description="Lipase 2">
    <location>
        <begin position="1"/>
        <end position="433"/>
    </location>
</feature>
<feature type="short sequence motif" description="Involved in the stabilization of the negatively charged intermediate by the formation of the oxyanion hole" evidence="2">
    <location>
        <begin position="165"/>
        <end position="167"/>
    </location>
</feature>
<feature type="active site" description="Charge relay system" evidence="1 3">
    <location>
        <position position="239"/>
    </location>
</feature>
<feature type="active site" evidence="1">
    <location>
        <position position="361"/>
    </location>
</feature>
<feature type="active site" evidence="1">
    <location>
        <position position="391"/>
    </location>
</feature>
<feature type="mutagenesis site" description="Loss of lipase and esterase activity." evidence="4">
    <original>H</original>
    <variation>Q</variation>
    <location>
        <position position="165"/>
    </location>
</feature>
<feature type="mutagenesis site" description="Loss of lipase and esterase activity." evidence="4">
    <original>S</original>
    <variation>A</variation>
    <location>
        <position position="239"/>
    </location>
</feature>